<dbReference type="EC" id="5.4.99.25" evidence="1"/>
<dbReference type="EMBL" id="CP001197">
    <property type="protein sequence ID" value="ACL09449.1"/>
    <property type="molecule type" value="Genomic_DNA"/>
</dbReference>
<dbReference type="SMR" id="B8DN09"/>
<dbReference type="STRING" id="883.DvMF_2510"/>
<dbReference type="KEGG" id="dvm:DvMF_2510"/>
<dbReference type="eggNOG" id="COG0130">
    <property type="taxonomic scope" value="Bacteria"/>
</dbReference>
<dbReference type="HOGENOM" id="CLU_032087_0_1_7"/>
<dbReference type="OrthoDB" id="9802309at2"/>
<dbReference type="GO" id="GO:0003723">
    <property type="term" value="F:RNA binding"/>
    <property type="evidence" value="ECO:0007669"/>
    <property type="project" value="InterPro"/>
</dbReference>
<dbReference type="GO" id="GO:0160148">
    <property type="term" value="F:tRNA pseudouridine(55) synthase activity"/>
    <property type="evidence" value="ECO:0007669"/>
    <property type="project" value="UniProtKB-EC"/>
</dbReference>
<dbReference type="GO" id="GO:1990481">
    <property type="term" value="P:mRNA pseudouridine synthesis"/>
    <property type="evidence" value="ECO:0007669"/>
    <property type="project" value="TreeGrafter"/>
</dbReference>
<dbReference type="GO" id="GO:0031119">
    <property type="term" value="P:tRNA pseudouridine synthesis"/>
    <property type="evidence" value="ECO:0007669"/>
    <property type="project" value="UniProtKB-UniRule"/>
</dbReference>
<dbReference type="CDD" id="cd02573">
    <property type="entry name" value="PseudoU_synth_EcTruB"/>
    <property type="match status" value="1"/>
</dbReference>
<dbReference type="Gene3D" id="3.30.2350.10">
    <property type="entry name" value="Pseudouridine synthase"/>
    <property type="match status" value="1"/>
</dbReference>
<dbReference type="HAMAP" id="MF_01080">
    <property type="entry name" value="TruB_bact"/>
    <property type="match status" value="1"/>
</dbReference>
<dbReference type="InterPro" id="IPR020103">
    <property type="entry name" value="PsdUridine_synth_cat_dom_sf"/>
</dbReference>
<dbReference type="InterPro" id="IPR002501">
    <property type="entry name" value="PsdUridine_synth_N"/>
</dbReference>
<dbReference type="InterPro" id="IPR014780">
    <property type="entry name" value="tRNA_psdUridine_synth_TruB"/>
</dbReference>
<dbReference type="NCBIfam" id="TIGR00431">
    <property type="entry name" value="TruB"/>
    <property type="match status" value="1"/>
</dbReference>
<dbReference type="PANTHER" id="PTHR13767:SF2">
    <property type="entry name" value="PSEUDOURIDYLATE SYNTHASE TRUB1"/>
    <property type="match status" value="1"/>
</dbReference>
<dbReference type="PANTHER" id="PTHR13767">
    <property type="entry name" value="TRNA-PSEUDOURIDINE SYNTHASE"/>
    <property type="match status" value="1"/>
</dbReference>
<dbReference type="Pfam" id="PF01509">
    <property type="entry name" value="TruB_N"/>
    <property type="match status" value="1"/>
</dbReference>
<dbReference type="SUPFAM" id="SSF55120">
    <property type="entry name" value="Pseudouridine synthase"/>
    <property type="match status" value="1"/>
</dbReference>
<reference key="1">
    <citation type="submission" date="2008-10" db="EMBL/GenBank/DDBJ databases">
        <title>Complete sequence of Desulfovibrio vulgaris str. 'Miyazaki F'.</title>
        <authorList>
            <person name="Lucas S."/>
            <person name="Copeland A."/>
            <person name="Lapidus A."/>
            <person name="Glavina del Rio T."/>
            <person name="Dalin E."/>
            <person name="Tice H."/>
            <person name="Bruce D."/>
            <person name="Goodwin L."/>
            <person name="Pitluck S."/>
            <person name="Sims D."/>
            <person name="Brettin T."/>
            <person name="Detter J.C."/>
            <person name="Han C."/>
            <person name="Larimer F."/>
            <person name="Land M."/>
            <person name="Hauser L."/>
            <person name="Kyrpides N."/>
            <person name="Mikhailova N."/>
            <person name="Hazen T.C."/>
            <person name="Richardson P."/>
        </authorList>
    </citation>
    <scope>NUCLEOTIDE SEQUENCE [LARGE SCALE GENOMIC DNA]</scope>
    <source>
        <strain>DSM 19637 / Miyazaki F</strain>
    </source>
</reference>
<gene>
    <name evidence="1" type="primary">truB</name>
    <name type="ordered locus">DvMF_2510</name>
</gene>
<feature type="chain" id="PRO_1000213503" description="tRNA pseudouridine synthase B">
    <location>
        <begin position="1"/>
        <end position="308"/>
    </location>
</feature>
<feature type="active site" description="Nucleophile" evidence="1">
    <location>
        <position position="44"/>
    </location>
</feature>
<organism>
    <name type="scientific">Nitratidesulfovibrio vulgaris (strain DSM 19637 / Miyazaki F)</name>
    <name type="common">Desulfovibrio vulgaris</name>
    <dbReference type="NCBI Taxonomy" id="883"/>
    <lineage>
        <taxon>Bacteria</taxon>
        <taxon>Pseudomonadati</taxon>
        <taxon>Thermodesulfobacteriota</taxon>
        <taxon>Desulfovibrionia</taxon>
        <taxon>Desulfovibrionales</taxon>
        <taxon>Desulfovibrionaceae</taxon>
        <taxon>Nitratidesulfovibrio</taxon>
    </lineage>
</organism>
<proteinExistence type="inferred from homology"/>
<name>TRUB_NITV9</name>
<evidence type="ECO:0000255" key="1">
    <source>
        <dbReference type="HAMAP-Rule" id="MF_01080"/>
    </source>
</evidence>
<accession>B8DN09</accession>
<sequence>MAVLPAQQHGLLVLNKPQGPTSAQCIARVKRLGQKKIGHAGTLDPMARGVLLVLLGHATKISGHLMADGEKVYLGTLRLGTTTDTWDAEGSVTATAPYDHVTPDDIRREVENWLGSTEQEVPPYSAAKHQGQPLYKLSRAGRETPVKTKTVEISRAQVVSCDLPSATFRVTCSSGTYIRSLAHSLGMRLGCGAMLTELTREYSHPFGIDEAHELDAVLAEPERLPERVIPVTRALPHWPKLRISAAQEAGVRNGMIVPYLPEAMAELPFAEGLKAIMLAPDDTPVALAETRIVNAQPVWTVLRGLWSQ</sequence>
<keyword id="KW-0413">Isomerase</keyword>
<keyword id="KW-0819">tRNA processing</keyword>
<comment type="function">
    <text evidence="1">Responsible for synthesis of pseudouridine from uracil-55 in the psi GC loop of transfer RNAs.</text>
</comment>
<comment type="catalytic activity">
    <reaction evidence="1">
        <text>uridine(55) in tRNA = pseudouridine(55) in tRNA</text>
        <dbReference type="Rhea" id="RHEA:42532"/>
        <dbReference type="Rhea" id="RHEA-COMP:10101"/>
        <dbReference type="Rhea" id="RHEA-COMP:10102"/>
        <dbReference type="ChEBI" id="CHEBI:65314"/>
        <dbReference type="ChEBI" id="CHEBI:65315"/>
        <dbReference type="EC" id="5.4.99.25"/>
    </reaction>
</comment>
<comment type="similarity">
    <text evidence="1">Belongs to the pseudouridine synthase TruB family. Type 1 subfamily.</text>
</comment>
<protein>
    <recommendedName>
        <fullName evidence="1">tRNA pseudouridine synthase B</fullName>
        <ecNumber evidence="1">5.4.99.25</ecNumber>
    </recommendedName>
    <alternativeName>
        <fullName evidence="1">tRNA pseudouridine(55) synthase</fullName>
        <shortName evidence="1">Psi55 synthase</shortName>
    </alternativeName>
    <alternativeName>
        <fullName evidence="1">tRNA pseudouridylate synthase</fullName>
    </alternativeName>
    <alternativeName>
        <fullName evidence="1">tRNA-uridine isomerase</fullName>
    </alternativeName>
</protein>